<protein>
    <recommendedName>
        <fullName evidence="1">Flagellar P-ring protein</fullName>
    </recommendedName>
    <alternativeName>
        <fullName evidence="1">Basal body P-ring protein</fullName>
    </alternativeName>
</protein>
<dbReference type="EMBL" id="CP000932">
    <property type="protein sequence ID" value="ACM63758.1"/>
    <property type="molecule type" value="Genomic_DNA"/>
</dbReference>
<dbReference type="RefSeq" id="WP_012661141.1">
    <property type="nucleotide sequence ID" value="NC_012039.1"/>
</dbReference>
<dbReference type="SMR" id="B9KFC3"/>
<dbReference type="STRING" id="306263.Cla_0400"/>
<dbReference type="KEGG" id="cla:CLA_0400"/>
<dbReference type="PATRIC" id="fig|306263.5.peg.402"/>
<dbReference type="eggNOG" id="COG1706">
    <property type="taxonomic scope" value="Bacteria"/>
</dbReference>
<dbReference type="HOGENOM" id="CLU_045235_1_0_7"/>
<dbReference type="Proteomes" id="UP000007727">
    <property type="component" value="Chromosome"/>
</dbReference>
<dbReference type="GO" id="GO:0009428">
    <property type="term" value="C:bacterial-type flagellum basal body, distal rod, P ring"/>
    <property type="evidence" value="ECO:0007669"/>
    <property type="project" value="InterPro"/>
</dbReference>
<dbReference type="GO" id="GO:0030288">
    <property type="term" value="C:outer membrane-bounded periplasmic space"/>
    <property type="evidence" value="ECO:0007669"/>
    <property type="project" value="InterPro"/>
</dbReference>
<dbReference type="GO" id="GO:0005198">
    <property type="term" value="F:structural molecule activity"/>
    <property type="evidence" value="ECO:0007669"/>
    <property type="project" value="InterPro"/>
</dbReference>
<dbReference type="GO" id="GO:0071973">
    <property type="term" value="P:bacterial-type flagellum-dependent cell motility"/>
    <property type="evidence" value="ECO:0007669"/>
    <property type="project" value="InterPro"/>
</dbReference>
<dbReference type="HAMAP" id="MF_00416">
    <property type="entry name" value="FlgI"/>
    <property type="match status" value="1"/>
</dbReference>
<dbReference type="InterPro" id="IPR001782">
    <property type="entry name" value="Flag_FlgI"/>
</dbReference>
<dbReference type="NCBIfam" id="NF003676">
    <property type="entry name" value="PRK05303.1"/>
    <property type="match status" value="1"/>
</dbReference>
<dbReference type="PANTHER" id="PTHR30381">
    <property type="entry name" value="FLAGELLAR P-RING PERIPLASMIC PROTEIN FLGI"/>
    <property type="match status" value="1"/>
</dbReference>
<dbReference type="PANTHER" id="PTHR30381:SF0">
    <property type="entry name" value="FLAGELLAR P-RING PROTEIN"/>
    <property type="match status" value="1"/>
</dbReference>
<dbReference type="Pfam" id="PF02119">
    <property type="entry name" value="FlgI"/>
    <property type="match status" value="1"/>
</dbReference>
<dbReference type="PRINTS" id="PR01010">
    <property type="entry name" value="FLGPRINGFLGI"/>
</dbReference>
<evidence type="ECO:0000255" key="1">
    <source>
        <dbReference type="HAMAP-Rule" id="MF_00416"/>
    </source>
</evidence>
<name>FLGI_CAMLR</name>
<proteinExistence type="inferred from homology"/>
<comment type="function">
    <text evidence="1">Assembles around the rod to form the L-ring and probably protects the motor/basal body from shearing forces during rotation.</text>
</comment>
<comment type="subunit">
    <text evidence="1">The basal body constitutes a major portion of the flagellar organelle and consists of four rings (L,P,S, and M) mounted on a central rod.</text>
</comment>
<comment type="subcellular location">
    <subcellularLocation>
        <location evidence="1">Periplasm</location>
    </subcellularLocation>
    <subcellularLocation>
        <location evidence="1">Bacterial flagellum basal body</location>
    </subcellularLocation>
</comment>
<comment type="similarity">
    <text evidence="1">Belongs to the FlgI family.</text>
</comment>
<keyword id="KW-0975">Bacterial flagellum</keyword>
<keyword id="KW-0574">Periplasm</keyword>
<keyword id="KW-1185">Reference proteome</keyword>
<keyword id="KW-0732">Signal</keyword>
<reference key="1">
    <citation type="journal article" date="2008" name="Foodborne Pathog. Dis.">
        <title>The complete genome sequence and analysis of the human pathogen Campylobacter lari.</title>
        <authorList>
            <person name="Miller W.G."/>
            <person name="Wang G."/>
            <person name="Binnewies T.T."/>
            <person name="Parker C.T."/>
        </authorList>
    </citation>
    <scope>NUCLEOTIDE SEQUENCE [LARGE SCALE GENOMIC DNA]</scope>
    <source>
        <strain>RM2100 / D67 / ATCC BAA-1060</strain>
    </source>
</reference>
<accession>B9KFC3</accession>
<gene>
    <name evidence="1" type="primary">flgI</name>
    <name type="ordered locus">Cla_0400</name>
</gene>
<sequence length="348" mass="36855">MRIFLLCLALSLSVFAATIKELTNVVGVRDNQLIGYGLVVGLNGSGDGTSSEFTLQSISNMLQGMNVKVSPGDIKSKNTAAVMVTAKLPAFARSGDKLDVSVASLGDAKSLQGGTLLMTALKGVDGEIYAVAQGSLAIGGLSPRPGAAGTHSTSANVINGAVVEREIPQNFSQSEDLILSLKEADFKTANNIERVLNTIFDTDIAKALDSRTIKLTKPEEFSHVEFMARVLEQDIAYTPESKVIIDERTGTIVAGVNIEVEPILITHKDITIKIDPNNTVALGQNEIDMKDGGILDPVSNTLKITNNKTTVANIARMLNKLGAAPNDIIAIMQNLKRAGAISAELEVI</sequence>
<feature type="signal peptide" evidence="1">
    <location>
        <begin position="1"/>
        <end position="16"/>
    </location>
</feature>
<feature type="chain" id="PRO_1000134837" description="Flagellar P-ring protein">
    <location>
        <begin position="17"/>
        <end position="348"/>
    </location>
</feature>
<organism>
    <name type="scientific">Campylobacter lari (strain RM2100 / D67 / ATCC BAA-1060)</name>
    <dbReference type="NCBI Taxonomy" id="306263"/>
    <lineage>
        <taxon>Bacteria</taxon>
        <taxon>Pseudomonadati</taxon>
        <taxon>Campylobacterota</taxon>
        <taxon>Epsilonproteobacteria</taxon>
        <taxon>Campylobacterales</taxon>
        <taxon>Campylobacteraceae</taxon>
        <taxon>Campylobacter</taxon>
    </lineage>
</organism>